<reference key="1">
    <citation type="submission" date="2007-04" db="EMBL/GenBank/DDBJ databases">
        <title>Genome sequence of the thermophilic hydrogen-producing bacterium Caldicellulosiruptor saccharolyticus DSM 8903.</title>
        <authorList>
            <person name="Copeland A."/>
            <person name="Lucas S."/>
            <person name="Lapidus A."/>
            <person name="Barry K."/>
            <person name="Detter J.C."/>
            <person name="Glavina del Rio T."/>
            <person name="Hammon N."/>
            <person name="Israni S."/>
            <person name="Dalin E."/>
            <person name="Tice H."/>
            <person name="Pitluck S."/>
            <person name="Kiss H."/>
            <person name="Brettin T."/>
            <person name="Bruce D."/>
            <person name="Han C."/>
            <person name="Schmutz J."/>
            <person name="Larimer F."/>
            <person name="Land M."/>
            <person name="Hauser L."/>
            <person name="Kyrpides N."/>
            <person name="Lykidis A."/>
            <person name="van de Werken H.J.G."/>
            <person name="Verhaart M.R.A."/>
            <person name="VanFossen A.L."/>
            <person name="Lewis D.L."/>
            <person name="Nichols J.D."/>
            <person name="Goorissen H.P."/>
            <person name="van Niel E.W.J."/>
            <person name="Stams F.J.M."/>
            <person name="Willquist K.U."/>
            <person name="Ward D.E."/>
            <person name="van der Oost J."/>
            <person name="Kelly R.M."/>
            <person name="Kengen S.M.W."/>
            <person name="Richardson P."/>
        </authorList>
    </citation>
    <scope>NUCLEOTIDE SEQUENCE [LARGE SCALE GENOMIC DNA]</scope>
    <source>
        <strain>ATCC 43494 / DSM 8903 / Tp8T 6331</strain>
    </source>
</reference>
<name>HFQ_CALS8</name>
<comment type="function">
    <text evidence="1">RNA chaperone that binds small regulatory RNA (sRNAs) and mRNAs to facilitate mRNA translational regulation in response to envelope stress, environmental stress and changes in metabolite concentrations. Also binds with high specificity to tRNAs.</text>
</comment>
<comment type="subunit">
    <text evidence="1">Homohexamer.</text>
</comment>
<comment type="similarity">
    <text evidence="1">Belongs to the Hfq family.</text>
</comment>
<organism>
    <name type="scientific">Caldicellulosiruptor saccharolyticus (strain ATCC 43494 / DSM 8903 / Tp8T 6331)</name>
    <dbReference type="NCBI Taxonomy" id="351627"/>
    <lineage>
        <taxon>Bacteria</taxon>
        <taxon>Bacillati</taxon>
        <taxon>Bacillota</taxon>
        <taxon>Bacillota incertae sedis</taxon>
        <taxon>Caldicellulosiruptorales</taxon>
        <taxon>Caldicellulosiruptoraceae</taxon>
        <taxon>Caldicellulosiruptor</taxon>
    </lineage>
</organism>
<accession>A4XL44</accession>
<dbReference type="EMBL" id="CP000679">
    <property type="protein sequence ID" value="ABP67629.1"/>
    <property type="molecule type" value="Genomic_DNA"/>
</dbReference>
<dbReference type="RefSeq" id="WP_011917564.1">
    <property type="nucleotide sequence ID" value="NC_009437.1"/>
</dbReference>
<dbReference type="SMR" id="A4XL44"/>
<dbReference type="STRING" id="351627.Csac_2044"/>
<dbReference type="KEGG" id="csc:Csac_2044"/>
<dbReference type="eggNOG" id="COG1923">
    <property type="taxonomic scope" value="Bacteria"/>
</dbReference>
<dbReference type="HOGENOM" id="CLU_113688_0_2_9"/>
<dbReference type="OrthoDB" id="9799751at2"/>
<dbReference type="Proteomes" id="UP000000256">
    <property type="component" value="Chromosome"/>
</dbReference>
<dbReference type="GO" id="GO:0005829">
    <property type="term" value="C:cytosol"/>
    <property type="evidence" value="ECO:0007669"/>
    <property type="project" value="TreeGrafter"/>
</dbReference>
<dbReference type="GO" id="GO:0003723">
    <property type="term" value="F:RNA binding"/>
    <property type="evidence" value="ECO:0007669"/>
    <property type="project" value="UniProtKB-UniRule"/>
</dbReference>
<dbReference type="GO" id="GO:0006355">
    <property type="term" value="P:regulation of DNA-templated transcription"/>
    <property type="evidence" value="ECO:0007669"/>
    <property type="project" value="InterPro"/>
</dbReference>
<dbReference type="GO" id="GO:0043487">
    <property type="term" value="P:regulation of RNA stability"/>
    <property type="evidence" value="ECO:0007669"/>
    <property type="project" value="TreeGrafter"/>
</dbReference>
<dbReference type="GO" id="GO:0045974">
    <property type="term" value="P:regulation of translation, ncRNA-mediated"/>
    <property type="evidence" value="ECO:0007669"/>
    <property type="project" value="TreeGrafter"/>
</dbReference>
<dbReference type="CDD" id="cd01716">
    <property type="entry name" value="Hfq"/>
    <property type="match status" value="1"/>
</dbReference>
<dbReference type="Gene3D" id="2.30.30.100">
    <property type="match status" value="1"/>
</dbReference>
<dbReference type="HAMAP" id="MF_00436">
    <property type="entry name" value="Hfq"/>
    <property type="match status" value="1"/>
</dbReference>
<dbReference type="InterPro" id="IPR005001">
    <property type="entry name" value="Hfq"/>
</dbReference>
<dbReference type="InterPro" id="IPR010920">
    <property type="entry name" value="LSM_dom_sf"/>
</dbReference>
<dbReference type="InterPro" id="IPR047575">
    <property type="entry name" value="Sm"/>
</dbReference>
<dbReference type="NCBIfam" id="TIGR02383">
    <property type="entry name" value="Hfq"/>
    <property type="match status" value="1"/>
</dbReference>
<dbReference type="NCBIfam" id="NF001602">
    <property type="entry name" value="PRK00395.1"/>
    <property type="match status" value="1"/>
</dbReference>
<dbReference type="PANTHER" id="PTHR34772">
    <property type="entry name" value="RNA-BINDING PROTEIN HFQ"/>
    <property type="match status" value="1"/>
</dbReference>
<dbReference type="PANTHER" id="PTHR34772:SF1">
    <property type="entry name" value="RNA-BINDING PROTEIN HFQ"/>
    <property type="match status" value="1"/>
</dbReference>
<dbReference type="Pfam" id="PF17209">
    <property type="entry name" value="Hfq"/>
    <property type="match status" value="1"/>
</dbReference>
<dbReference type="SUPFAM" id="SSF50182">
    <property type="entry name" value="Sm-like ribonucleoproteins"/>
    <property type="match status" value="1"/>
</dbReference>
<dbReference type="PROSITE" id="PS52002">
    <property type="entry name" value="SM"/>
    <property type="match status" value="1"/>
</dbReference>
<feature type="chain" id="PRO_1000025900" description="RNA-binding protein Hfq">
    <location>
        <begin position="1"/>
        <end position="99"/>
    </location>
</feature>
<feature type="domain" description="Sm" evidence="2">
    <location>
        <begin position="10"/>
        <end position="71"/>
    </location>
</feature>
<feature type="region of interest" description="Disordered" evidence="3">
    <location>
        <begin position="77"/>
        <end position="99"/>
    </location>
</feature>
<protein>
    <recommendedName>
        <fullName evidence="1">RNA-binding protein Hfq</fullName>
    </recommendedName>
</protein>
<keyword id="KW-0694">RNA-binding</keyword>
<keyword id="KW-0346">Stress response</keyword>
<gene>
    <name evidence="1" type="primary">hfq</name>
    <name type="ordered locus">Csac_2044</name>
</gene>
<sequence length="99" mass="11225">MAKGNLNLQDLFLNQLRKEKVNVTIFLLSGFQLKGVIKGFDNFTLVVETENNKQQLIYKHAISSILPSKPINYMAQVQNSQVQNTASQQSNNNQNQESK</sequence>
<evidence type="ECO:0000255" key="1">
    <source>
        <dbReference type="HAMAP-Rule" id="MF_00436"/>
    </source>
</evidence>
<evidence type="ECO:0000255" key="2">
    <source>
        <dbReference type="PROSITE-ProRule" id="PRU01346"/>
    </source>
</evidence>
<evidence type="ECO:0000256" key="3">
    <source>
        <dbReference type="SAM" id="MobiDB-lite"/>
    </source>
</evidence>
<proteinExistence type="inferred from homology"/>